<sequence length="121" mass="14329">MRKSYKQFYKAPRRHIQVWEAANGPIPKGYYIDHIDGNPLNDALDNLRLALPKENSWNMKTPKSNTSGLKGLSWSKEREMWRGTVTAEGKQHNFRSRDLLEVVAWIYRTRRELHGQFARFR</sequence>
<reference key="1">
    <citation type="journal article" date="1983" name="J. Mol. Biol.">
        <title>Complete nucleotide sequence of bacteriophage T7 DNA and the locations of T7 genetic elements.</title>
        <authorList>
            <person name="Dunn J.J."/>
            <person name="Studier F.W."/>
        </authorList>
    </citation>
    <scope>NUCLEOTIDE SEQUENCE [LARGE SCALE GENOMIC DNA]</scope>
</reference>
<reference key="2">
    <citation type="journal article" date="1981" name="J. Mol. Biol.">
        <title>Nucleotide sequence from the genetic left end of bacteriophage T7 DNA to the beginning of gene 4.</title>
        <authorList>
            <person name="Dunn J.J."/>
            <person name="Studier F.W."/>
        </authorList>
    </citation>
    <scope>NUCLEOTIDE SEQUENCE [GENOMIC DNA]</scope>
</reference>
<keyword id="KW-1185">Reference proteome</keyword>
<name>Y38_BPT7</name>
<gene>
    <name type="ordered locus">3.8</name>
</gene>
<organism>
    <name type="scientific">Escherichia phage T7</name>
    <name type="common">Bacteriophage T7</name>
    <dbReference type="NCBI Taxonomy" id="10760"/>
    <lineage>
        <taxon>Viruses</taxon>
        <taxon>Duplodnaviria</taxon>
        <taxon>Heunggongvirae</taxon>
        <taxon>Uroviricota</taxon>
        <taxon>Caudoviricetes</taxon>
        <taxon>Autographiviridae</taxon>
        <taxon>Studiervirinae</taxon>
        <taxon>Teseptimavirus</taxon>
        <taxon>Teseptimavirus T7</taxon>
    </lineage>
</organism>
<dbReference type="EMBL" id="V01146">
    <property type="protein sequence ID" value="CAA24404.1"/>
    <property type="molecule type" value="Genomic_DNA"/>
</dbReference>
<dbReference type="EMBL" id="V01127">
    <property type="protein sequence ID" value="CAA24347.1"/>
    <property type="molecule type" value="Genomic_DNA"/>
</dbReference>
<dbReference type="PIR" id="D43003">
    <property type="entry name" value="Q3BP87"/>
</dbReference>
<dbReference type="RefSeq" id="NP_041974.1">
    <property type="nucleotide sequence ID" value="NC_001604.1"/>
</dbReference>
<dbReference type="SMR" id="P03797"/>
<dbReference type="KEGG" id="vg:1261065"/>
<dbReference type="OrthoDB" id="21336at10239"/>
<dbReference type="Proteomes" id="UP000000840">
    <property type="component" value="Genome"/>
</dbReference>
<dbReference type="Gene3D" id="3.90.75.20">
    <property type="match status" value="1"/>
</dbReference>
<dbReference type="InterPro" id="IPR044925">
    <property type="entry name" value="His-Me_finger_sf"/>
</dbReference>
<dbReference type="InterPro" id="IPR003615">
    <property type="entry name" value="HNH_nuc"/>
</dbReference>
<dbReference type="Pfam" id="PF13392">
    <property type="entry name" value="HNH_3"/>
    <property type="match status" value="1"/>
</dbReference>
<dbReference type="SMART" id="SM00507">
    <property type="entry name" value="HNHc"/>
    <property type="match status" value="1"/>
</dbReference>
<dbReference type="SUPFAM" id="SSF54060">
    <property type="entry name" value="His-Me finger endonucleases"/>
    <property type="match status" value="1"/>
</dbReference>
<accession>P03797</accession>
<feature type="chain" id="PRO_0000106488" description="Protein 3.8">
    <location>
        <begin position="1"/>
        <end position="121"/>
    </location>
</feature>
<proteinExistence type="predicted"/>
<organismHost>
    <name type="scientific">Escherichia coli</name>
    <dbReference type="NCBI Taxonomy" id="562"/>
</organismHost>
<protein>
    <recommendedName>
        <fullName>Protein 3.8</fullName>
    </recommendedName>
    <alternativeName>
        <fullName>Gene product 3.8</fullName>
        <shortName>Gp3.8</shortName>
    </alternativeName>
</protein>